<organism>
    <name type="scientific">Xanthomonas oryzae pv. oryzae (strain PXO99A)</name>
    <dbReference type="NCBI Taxonomy" id="360094"/>
    <lineage>
        <taxon>Bacteria</taxon>
        <taxon>Pseudomonadati</taxon>
        <taxon>Pseudomonadota</taxon>
        <taxon>Gammaproteobacteria</taxon>
        <taxon>Lysobacterales</taxon>
        <taxon>Lysobacteraceae</taxon>
        <taxon>Xanthomonas</taxon>
    </lineage>
</organism>
<keyword id="KW-0456">Lyase</keyword>
<keyword id="KW-0460">Magnesium</keyword>
<keyword id="KW-0479">Metal-binding</keyword>
<accession>B2SV55</accession>
<evidence type="ECO:0000250" key="1"/>
<evidence type="ECO:0000255" key="2">
    <source>
        <dbReference type="HAMAP-Rule" id="MF_01289"/>
    </source>
</evidence>
<evidence type="ECO:0000256" key="3">
    <source>
        <dbReference type="SAM" id="MobiDB-lite"/>
    </source>
</evidence>
<reference key="1">
    <citation type="journal article" date="2008" name="BMC Genomics">
        <title>Genome sequence and rapid evolution of the rice pathogen Xanthomonas oryzae pv. oryzae PXO99A.</title>
        <authorList>
            <person name="Salzberg S.L."/>
            <person name="Sommer D.D."/>
            <person name="Schatz M.C."/>
            <person name="Phillippy A.M."/>
            <person name="Rabinowicz P.D."/>
            <person name="Tsuge S."/>
            <person name="Furutani A."/>
            <person name="Ochiai H."/>
            <person name="Delcher A.L."/>
            <person name="Kelley D."/>
            <person name="Madupu R."/>
            <person name="Puiu D."/>
            <person name="Radune D."/>
            <person name="Shumway M."/>
            <person name="Trapnell C."/>
            <person name="Aparna G."/>
            <person name="Jha G."/>
            <person name="Pandey A."/>
            <person name="Patil P.B."/>
            <person name="Ishihara H."/>
            <person name="Meyer D.F."/>
            <person name="Szurek B."/>
            <person name="Verdier V."/>
            <person name="Koebnik R."/>
            <person name="Dow J.M."/>
            <person name="Ryan R.P."/>
            <person name="Hirata H."/>
            <person name="Tsuyumu S."/>
            <person name="Won Lee S."/>
            <person name="Seo Y.-S."/>
            <person name="Sriariyanum M."/>
            <person name="Ronald P.C."/>
            <person name="Sonti R.V."/>
            <person name="Van Sluys M.-A."/>
            <person name="Leach J.E."/>
            <person name="White F.F."/>
            <person name="Bogdanove A.J."/>
        </authorList>
    </citation>
    <scope>NUCLEOTIDE SEQUENCE [LARGE SCALE GENOMIC DNA]</scope>
    <source>
        <strain>PXO99A</strain>
    </source>
</reference>
<feature type="chain" id="PRO_0000352644" description="D-galactonate dehydratase">
    <location>
        <begin position="1"/>
        <end position="382"/>
    </location>
</feature>
<feature type="region of interest" description="Disordered" evidence="3">
    <location>
        <begin position="361"/>
        <end position="382"/>
    </location>
</feature>
<feature type="active site" description="Proton donor" evidence="1">
    <location>
        <position position="185"/>
    </location>
</feature>
<feature type="active site" description="Proton acceptor" evidence="1">
    <location>
        <position position="285"/>
    </location>
</feature>
<feature type="binding site" evidence="2">
    <location>
        <position position="183"/>
    </location>
    <ligand>
        <name>Mg(2+)</name>
        <dbReference type="ChEBI" id="CHEBI:18420"/>
    </ligand>
</feature>
<feature type="binding site" evidence="2">
    <location>
        <position position="209"/>
    </location>
    <ligand>
        <name>Mg(2+)</name>
        <dbReference type="ChEBI" id="CHEBI:18420"/>
    </ligand>
</feature>
<feature type="binding site" evidence="2">
    <location>
        <position position="235"/>
    </location>
    <ligand>
        <name>Mg(2+)</name>
        <dbReference type="ChEBI" id="CHEBI:18420"/>
    </ligand>
</feature>
<feature type="site" description="Increases basicity of active site His" evidence="2">
    <location>
        <position position="258"/>
    </location>
</feature>
<feature type="site" description="Transition state stabilizer" evidence="2">
    <location>
        <position position="310"/>
    </location>
</feature>
<sequence>MKITRLTTYHAAPRWLFLKVETDEGITGWGEPVIEGRARSVEAAVHELAGYVVGKDPARINDLWQTMYRAGFYRGGAILMSAIAGIDQALWDIKGKALGVPVYELLGGLVRDRMKTYRWVGGDRPGAIIQQITDYRALGFDTFKFNGTEEMKLIDSARAVDAAVVKVAEIREAFGNTIDFGIDFHGRVGAPMAKALLRELEPFKPLFVEEPVLAEQAEYYPRLAASTSIPLAAGERMFSRFEFKNVLCAGGIGMVQPDLSHAGGITECVKIAAIAEAYDVGFAPHCPLGPIALAACLHVDFVSHNAVLQEQSIGIHYNEGADLLDYVINKDDFHCVDGSIAALPKPGLGVEIDEDMLKRANENPPDWRNPVWRHSDGSIAEW</sequence>
<proteinExistence type="inferred from homology"/>
<comment type="function">
    <text evidence="2">Catalyzes the dehydration of D-galactonate to 2-keto-3-deoxy-D-galactonate.</text>
</comment>
<comment type="catalytic activity">
    <reaction evidence="2">
        <text>D-galactonate = 2-dehydro-3-deoxy-D-galactonate + H2O</text>
        <dbReference type="Rhea" id="RHEA:18649"/>
        <dbReference type="ChEBI" id="CHEBI:12931"/>
        <dbReference type="ChEBI" id="CHEBI:15377"/>
        <dbReference type="ChEBI" id="CHEBI:57989"/>
        <dbReference type="EC" id="4.2.1.6"/>
    </reaction>
</comment>
<comment type="cofactor">
    <cofactor evidence="2">
        <name>Mg(2+)</name>
        <dbReference type="ChEBI" id="CHEBI:18420"/>
    </cofactor>
    <text evidence="2">Binds 1 Mg(2+) ion per subunit.</text>
</comment>
<comment type="pathway">
    <text evidence="2">Carbohydrate acid metabolism; D-galactonate degradation; D-glyceraldehyde 3-phosphate and pyruvate from D-galactonate: step 1/3.</text>
</comment>
<comment type="miscellaneous">
    <text evidence="2">Reaction proceeds via an anti dehydration.</text>
</comment>
<comment type="similarity">
    <text evidence="2">Belongs to the mandelate racemase/muconate lactonizing enzyme family. GalD subfamily.</text>
</comment>
<gene>
    <name evidence="2" type="primary">dgoD</name>
    <name type="ordered locus">PXO_00121</name>
</gene>
<dbReference type="EC" id="4.2.1.6" evidence="2"/>
<dbReference type="EMBL" id="CP000967">
    <property type="protein sequence ID" value="ACD58349.1"/>
    <property type="molecule type" value="Genomic_DNA"/>
</dbReference>
<dbReference type="RefSeq" id="WP_011408875.1">
    <property type="nucleotide sequence ID" value="NC_010717.2"/>
</dbReference>
<dbReference type="SMR" id="B2SV55"/>
<dbReference type="KEGG" id="xop:PXO_00121"/>
<dbReference type="eggNOG" id="COG4948">
    <property type="taxonomic scope" value="Bacteria"/>
</dbReference>
<dbReference type="HOGENOM" id="CLU_030273_3_2_6"/>
<dbReference type="UniPathway" id="UPA00081">
    <property type="reaction ID" value="UER00518"/>
</dbReference>
<dbReference type="Proteomes" id="UP000001740">
    <property type="component" value="Chromosome"/>
</dbReference>
<dbReference type="GO" id="GO:0008869">
    <property type="term" value="F:galactonate dehydratase activity"/>
    <property type="evidence" value="ECO:0007669"/>
    <property type="project" value="UniProtKB-UniRule"/>
</dbReference>
<dbReference type="GO" id="GO:0000287">
    <property type="term" value="F:magnesium ion binding"/>
    <property type="evidence" value="ECO:0007669"/>
    <property type="project" value="UniProtKB-UniRule"/>
</dbReference>
<dbReference type="GO" id="GO:0009063">
    <property type="term" value="P:amino acid catabolic process"/>
    <property type="evidence" value="ECO:0007669"/>
    <property type="project" value="InterPro"/>
</dbReference>
<dbReference type="GO" id="GO:0034194">
    <property type="term" value="P:D-galactonate catabolic process"/>
    <property type="evidence" value="ECO:0007669"/>
    <property type="project" value="UniProtKB-UniRule"/>
</dbReference>
<dbReference type="CDD" id="cd03325">
    <property type="entry name" value="D-galactonate_dehydratase"/>
    <property type="match status" value="1"/>
</dbReference>
<dbReference type="FunFam" id="3.30.390.10:FF:000003">
    <property type="entry name" value="D-galactonate dehydratase"/>
    <property type="match status" value="1"/>
</dbReference>
<dbReference type="Gene3D" id="3.20.20.120">
    <property type="entry name" value="Enolase-like C-terminal domain"/>
    <property type="match status" value="1"/>
</dbReference>
<dbReference type="Gene3D" id="3.30.390.10">
    <property type="entry name" value="Enolase-like, N-terminal domain"/>
    <property type="match status" value="1"/>
</dbReference>
<dbReference type="HAMAP" id="MF_01289">
    <property type="entry name" value="Galacton_dehydrat"/>
    <property type="match status" value="1"/>
</dbReference>
<dbReference type="InterPro" id="IPR034593">
    <property type="entry name" value="DgoD-like"/>
</dbReference>
<dbReference type="InterPro" id="IPR036849">
    <property type="entry name" value="Enolase-like_C_sf"/>
</dbReference>
<dbReference type="InterPro" id="IPR029017">
    <property type="entry name" value="Enolase-like_N"/>
</dbReference>
<dbReference type="InterPro" id="IPR029065">
    <property type="entry name" value="Enolase_C-like"/>
</dbReference>
<dbReference type="InterPro" id="IPR023592">
    <property type="entry name" value="Galactonate_deHydtase"/>
</dbReference>
<dbReference type="InterPro" id="IPR018110">
    <property type="entry name" value="Mandel_Rmase/mucon_lact_enz_CS"/>
</dbReference>
<dbReference type="InterPro" id="IPR013342">
    <property type="entry name" value="Mandelate_racemase_C"/>
</dbReference>
<dbReference type="InterPro" id="IPR013341">
    <property type="entry name" value="Mandelate_racemase_N_dom"/>
</dbReference>
<dbReference type="NCBIfam" id="NF010624">
    <property type="entry name" value="PRK14017.1"/>
    <property type="match status" value="1"/>
</dbReference>
<dbReference type="PANTHER" id="PTHR48080:SF2">
    <property type="entry name" value="D-GALACTONATE DEHYDRATASE"/>
    <property type="match status" value="1"/>
</dbReference>
<dbReference type="PANTHER" id="PTHR48080">
    <property type="entry name" value="D-GALACTONATE DEHYDRATASE-RELATED"/>
    <property type="match status" value="1"/>
</dbReference>
<dbReference type="Pfam" id="PF13378">
    <property type="entry name" value="MR_MLE_C"/>
    <property type="match status" value="1"/>
</dbReference>
<dbReference type="Pfam" id="PF02746">
    <property type="entry name" value="MR_MLE_N"/>
    <property type="match status" value="1"/>
</dbReference>
<dbReference type="SFLD" id="SFLDF00003">
    <property type="entry name" value="D-galactonate_dehydratase"/>
    <property type="match status" value="1"/>
</dbReference>
<dbReference type="SFLD" id="SFLDS00001">
    <property type="entry name" value="Enolase"/>
    <property type="match status" value="1"/>
</dbReference>
<dbReference type="SMART" id="SM00922">
    <property type="entry name" value="MR_MLE"/>
    <property type="match status" value="1"/>
</dbReference>
<dbReference type="SUPFAM" id="SSF51604">
    <property type="entry name" value="Enolase C-terminal domain-like"/>
    <property type="match status" value="1"/>
</dbReference>
<dbReference type="SUPFAM" id="SSF54826">
    <property type="entry name" value="Enolase N-terminal domain-like"/>
    <property type="match status" value="1"/>
</dbReference>
<dbReference type="PROSITE" id="PS00908">
    <property type="entry name" value="MR_MLE_1"/>
    <property type="match status" value="1"/>
</dbReference>
<dbReference type="PROSITE" id="PS00909">
    <property type="entry name" value="MR_MLE_2"/>
    <property type="match status" value="1"/>
</dbReference>
<protein>
    <recommendedName>
        <fullName evidence="2">D-galactonate dehydratase</fullName>
        <shortName evidence="2">GalD</shortName>
        <ecNumber evidence="2">4.2.1.6</ecNumber>
    </recommendedName>
</protein>
<name>DGOD_XANOP</name>